<organism>
    <name type="scientific">Flaveria bidentis</name>
    <name type="common">Coastal plain yellowtops</name>
    <name type="synonym">Ethulia bidentis</name>
    <dbReference type="NCBI Taxonomy" id="4224"/>
    <lineage>
        <taxon>Eukaryota</taxon>
        <taxon>Viridiplantae</taxon>
        <taxon>Streptophyta</taxon>
        <taxon>Embryophyta</taxon>
        <taxon>Tracheophyta</taxon>
        <taxon>Spermatophyta</taxon>
        <taxon>Magnoliopsida</taxon>
        <taxon>eudicotyledons</taxon>
        <taxon>Gunneridae</taxon>
        <taxon>Pentapetalae</taxon>
        <taxon>asterids</taxon>
        <taxon>campanulids</taxon>
        <taxon>Asterales</taxon>
        <taxon>Asteraceae</taxon>
        <taxon>Asteroideae</taxon>
        <taxon>Heliantheae alliance</taxon>
        <taxon>Tageteae</taxon>
        <taxon>Flaveria</taxon>
    </lineage>
</organism>
<evidence type="ECO:0000250" key="1"/>
<evidence type="ECO:0000305" key="2"/>
<sequence length="148" mass="16137">MEQTFIMIKPDGVQSGLVGEIIGRFEKKGFSLKGLKLLTVDRAFAEKHYADLSSKPFFNGLVEYIVSGPVVAMVWEGKNVVTTGREIIGATNPAESAPGTIRGDFAIDIGRNVIHGSDAVESARKVIGLWFPEGVANWSSSLHPWIYE</sequence>
<protein>
    <recommendedName>
        <fullName>Nucleoside diphosphate kinase A</fullName>
        <shortName>NDK A</shortName>
        <shortName>NDP kinase A</shortName>
        <ecNumber>2.7.4.6</ecNumber>
    </recommendedName>
</protein>
<accession>P47919</accession>
<feature type="chain" id="PRO_0000137136" description="Nucleoside diphosphate kinase A">
    <location>
        <begin position="1"/>
        <end position="148"/>
    </location>
</feature>
<feature type="active site" description="Pros-phosphohistidine intermediate" evidence="1">
    <location>
        <position position="115"/>
    </location>
</feature>
<feature type="binding site" evidence="1">
    <location>
        <position position="9"/>
    </location>
    <ligand>
        <name>ATP</name>
        <dbReference type="ChEBI" id="CHEBI:30616"/>
    </ligand>
</feature>
<feature type="binding site" evidence="1">
    <location>
        <position position="57"/>
    </location>
    <ligand>
        <name>ATP</name>
        <dbReference type="ChEBI" id="CHEBI:30616"/>
    </ligand>
</feature>
<feature type="binding site" evidence="1">
    <location>
        <position position="85"/>
    </location>
    <ligand>
        <name>ATP</name>
        <dbReference type="ChEBI" id="CHEBI:30616"/>
    </ligand>
</feature>
<feature type="binding site" evidence="1">
    <location>
        <position position="91"/>
    </location>
    <ligand>
        <name>ATP</name>
        <dbReference type="ChEBI" id="CHEBI:30616"/>
    </ligand>
</feature>
<feature type="binding site" evidence="1">
    <location>
        <position position="102"/>
    </location>
    <ligand>
        <name>ATP</name>
        <dbReference type="ChEBI" id="CHEBI:30616"/>
    </ligand>
</feature>
<feature type="binding site" evidence="1">
    <location>
        <position position="112"/>
    </location>
    <ligand>
        <name>ATP</name>
        <dbReference type="ChEBI" id="CHEBI:30616"/>
    </ligand>
</feature>
<keyword id="KW-0067">ATP-binding</keyword>
<keyword id="KW-0418">Kinase</keyword>
<keyword id="KW-0460">Magnesium</keyword>
<keyword id="KW-0479">Metal-binding</keyword>
<keyword id="KW-0546">Nucleotide metabolism</keyword>
<keyword id="KW-0547">Nucleotide-binding</keyword>
<keyword id="KW-0597">Phosphoprotein</keyword>
<keyword id="KW-0808">Transferase</keyword>
<reference key="1">
    <citation type="journal article" date="1996" name="Genome">
        <title>Molecular and biochemical characterization of two nucleoside diphosphate kinase cDNA clones from Flaveria bidentis.</title>
        <authorList>
            <person name="Ananvoranich S."/>
            <person name="Grandmaison J."/>
            <person name="Gulick P.J."/>
        </authorList>
    </citation>
    <scope>NUCLEOTIDE SEQUENCE [MRNA]</scope>
    <source>
        <tissue>Leaf</tissue>
    </source>
</reference>
<comment type="function">
    <text>Major role in the synthesis of nucleoside triphosphates other than ATP. The ATP gamma phosphate is transferred to the NDP beta phosphate via a ping-pong mechanism, using a phosphorylated active-site intermediate.</text>
</comment>
<comment type="catalytic activity">
    <reaction>
        <text>a 2'-deoxyribonucleoside 5'-diphosphate + ATP = a 2'-deoxyribonucleoside 5'-triphosphate + ADP</text>
        <dbReference type="Rhea" id="RHEA:44640"/>
        <dbReference type="ChEBI" id="CHEBI:30616"/>
        <dbReference type="ChEBI" id="CHEBI:61560"/>
        <dbReference type="ChEBI" id="CHEBI:73316"/>
        <dbReference type="ChEBI" id="CHEBI:456216"/>
        <dbReference type="EC" id="2.7.4.6"/>
    </reaction>
</comment>
<comment type="catalytic activity">
    <reaction>
        <text>a ribonucleoside 5'-diphosphate + ATP = a ribonucleoside 5'-triphosphate + ADP</text>
        <dbReference type="Rhea" id="RHEA:18113"/>
        <dbReference type="ChEBI" id="CHEBI:30616"/>
        <dbReference type="ChEBI" id="CHEBI:57930"/>
        <dbReference type="ChEBI" id="CHEBI:61557"/>
        <dbReference type="ChEBI" id="CHEBI:456216"/>
        <dbReference type="EC" id="2.7.4.6"/>
    </reaction>
</comment>
<comment type="cofactor">
    <cofactor evidence="1">
        <name>Mg(2+)</name>
        <dbReference type="ChEBI" id="CHEBI:18420"/>
    </cofactor>
</comment>
<comment type="similarity">
    <text evidence="2">Belongs to the NDK family.</text>
</comment>
<name>NDKA_FLABI</name>
<dbReference type="EC" id="2.7.4.6"/>
<dbReference type="EMBL" id="U10282">
    <property type="protein sequence ID" value="AAA19004.1"/>
    <property type="molecule type" value="mRNA"/>
</dbReference>
<dbReference type="SMR" id="P47919"/>
<dbReference type="GO" id="GO:0005524">
    <property type="term" value="F:ATP binding"/>
    <property type="evidence" value="ECO:0007669"/>
    <property type="project" value="UniProtKB-KW"/>
</dbReference>
<dbReference type="GO" id="GO:0046872">
    <property type="term" value="F:metal ion binding"/>
    <property type="evidence" value="ECO:0007669"/>
    <property type="project" value="UniProtKB-KW"/>
</dbReference>
<dbReference type="GO" id="GO:0004550">
    <property type="term" value="F:nucleoside diphosphate kinase activity"/>
    <property type="evidence" value="ECO:0007669"/>
    <property type="project" value="UniProtKB-EC"/>
</dbReference>
<dbReference type="GO" id="GO:0006241">
    <property type="term" value="P:CTP biosynthetic process"/>
    <property type="evidence" value="ECO:0007669"/>
    <property type="project" value="InterPro"/>
</dbReference>
<dbReference type="GO" id="GO:0006183">
    <property type="term" value="P:GTP biosynthetic process"/>
    <property type="evidence" value="ECO:0007669"/>
    <property type="project" value="InterPro"/>
</dbReference>
<dbReference type="GO" id="GO:0006228">
    <property type="term" value="P:UTP biosynthetic process"/>
    <property type="evidence" value="ECO:0007669"/>
    <property type="project" value="InterPro"/>
</dbReference>
<dbReference type="CDD" id="cd04413">
    <property type="entry name" value="NDPk_I"/>
    <property type="match status" value="1"/>
</dbReference>
<dbReference type="FunFam" id="3.30.70.141:FF:000002">
    <property type="entry name" value="Nucleoside diphosphate kinase"/>
    <property type="match status" value="1"/>
</dbReference>
<dbReference type="Gene3D" id="3.30.70.141">
    <property type="entry name" value="Nucleoside diphosphate kinase-like domain"/>
    <property type="match status" value="1"/>
</dbReference>
<dbReference type="HAMAP" id="MF_00451">
    <property type="entry name" value="NDP_kinase"/>
    <property type="match status" value="1"/>
</dbReference>
<dbReference type="InterPro" id="IPR034907">
    <property type="entry name" value="NDK-like_dom"/>
</dbReference>
<dbReference type="InterPro" id="IPR036850">
    <property type="entry name" value="NDK-like_dom_sf"/>
</dbReference>
<dbReference type="InterPro" id="IPR001564">
    <property type="entry name" value="Nucleoside_diP_kinase"/>
</dbReference>
<dbReference type="InterPro" id="IPR023005">
    <property type="entry name" value="Nucleoside_diP_kinase_AS"/>
</dbReference>
<dbReference type="NCBIfam" id="NF001908">
    <property type="entry name" value="PRK00668.1"/>
    <property type="match status" value="1"/>
</dbReference>
<dbReference type="PANTHER" id="PTHR11349">
    <property type="entry name" value="NUCLEOSIDE DIPHOSPHATE KINASE"/>
    <property type="match status" value="1"/>
</dbReference>
<dbReference type="Pfam" id="PF00334">
    <property type="entry name" value="NDK"/>
    <property type="match status" value="1"/>
</dbReference>
<dbReference type="PRINTS" id="PR01243">
    <property type="entry name" value="NUCDPKINASE"/>
</dbReference>
<dbReference type="SMART" id="SM00562">
    <property type="entry name" value="NDK"/>
    <property type="match status" value="1"/>
</dbReference>
<dbReference type="SUPFAM" id="SSF54919">
    <property type="entry name" value="Nucleoside diphosphate kinase, NDK"/>
    <property type="match status" value="1"/>
</dbReference>
<dbReference type="PROSITE" id="PS00469">
    <property type="entry name" value="NDPK"/>
    <property type="match status" value="1"/>
</dbReference>
<dbReference type="PROSITE" id="PS51374">
    <property type="entry name" value="NDPK_LIKE"/>
    <property type="match status" value="1"/>
</dbReference>
<proteinExistence type="evidence at transcript level"/>